<accession>Q9HN50</accession>
<reference key="1">
    <citation type="journal article" date="2000" name="Proc. Natl. Acad. Sci. U.S.A.">
        <title>Genome sequence of Halobacterium species NRC-1.</title>
        <authorList>
            <person name="Ng W.V."/>
            <person name="Kennedy S.P."/>
            <person name="Mahairas G.G."/>
            <person name="Berquist B."/>
            <person name="Pan M."/>
            <person name="Shukla H.D."/>
            <person name="Lasky S.R."/>
            <person name="Baliga N.S."/>
            <person name="Thorsson V."/>
            <person name="Sbrogna J."/>
            <person name="Swartzell S."/>
            <person name="Weir D."/>
            <person name="Hall J."/>
            <person name="Dahl T.A."/>
            <person name="Welti R."/>
            <person name="Goo Y.A."/>
            <person name="Leithauser B."/>
            <person name="Keller K."/>
            <person name="Cruz R."/>
            <person name="Danson M.J."/>
            <person name="Hough D.W."/>
            <person name="Maddocks D.G."/>
            <person name="Jablonski P.E."/>
            <person name="Krebs M.P."/>
            <person name="Angevine C.M."/>
            <person name="Dale H."/>
            <person name="Isenbarger T.A."/>
            <person name="Peck R.F."/>
            <person name="Pohlschroder M."/>
            <person name="Spudich J.L."/>
            <person name="Jung K.-H."/>
            <person name="Alam M."/>
            <person name="Freitas T."/>
            <person name="Hou S."/>
            <person name="Daniels C.J."/>
            <person name="Dennis P.P."/>
            <person name="Omer A.D."/>
            <person name="Ebhardt H."/>
            <person name="Lowe T.M."/>
            <person name="Liang P."/>
            <person name="Riley M."/>
            <person name="Hood L."/>
            <person name="DasSarma S."/>
        </authorList>
    </citation>
    <scope>NUCLEOTIDE SEQUENCE [LARGE SCALE GENOMIC DNA]</scope>
    <source>
        <strain>ATCC 700922 / JCM 11081 / NRC-1</strain>
    </source>
</reference>
<comment type="function">
    <text evidence="1">May play a key role in the regulation of the intracellular concentration of adenosylhomocysteine.</text>
</comment>
<comment type="catalytic activity">
    <reaction evidence="1">
        <text>S-adenosyl-L-homocysteine + H2O = L-homocysteine + adenosine</text>
        <dbReference type="Rhea" id="RHEA:21708"/>
        <dbReference type="ChEBI" id="CHEBI:15377"/>
        <dbReference type="ChEBI" id="CHEBI:16335"/>
        <dbReference type="ChEBI" id="CHEBI:57856"/>
        <dbReference type="ChEBI" id="CHEBI:58199"/>
        <dbReference type="EC" id="3.13.2.1"/>
    </reaction>
</comment>
<comment type="cofactor">
    <cofactor evidence="1">
        <name>NAD(+)</name>
        <dbReference type="ChEBI" id="CHEBI:57540"/>
    </cofactor>
    <text evidence="1">Binds 1 NAD(+) per subunit.</text>
</comment>
<comment type="pathway">
    <text evidence="1">Amino-acid biosynthesis; L-homocysteine biosynthesis; L-homocysteine from S-adenosyl-L-homocysteine: step 1/1.</text>
</comment>
<comment type="subcellular location">
    <subcellularLocation>
        <location evidence="1">Cytoplasm</location>
    </subcellularLocation>
</comment>
<comment type="similarity">
    <text evidence="1">Belongs to the adenosylhomocysteinase family.</text>
</comment>
<keyword id="KW-0963">Cytoplasm</keyword>
<keyword id="KW-0378">Hydrolase</keyword>
<keyword id="KW-0520">NAD</keyword>
<keyword id="KW-0554">One-carbon metabolism</keyword>
<keyword id="KW-1185">Reference proteome</keyword>
<name>SAHH_HALSA</name>
<protein>
    <recommendedName>
        <fullName evidence="1">Adenosylhomocysteinase</fullName>
        <ecNumber evidence="1">3.13.2.1</ecNumber>
    </recommendedName>
    <alternativeName>
        <fullName evidence="1">S-adenosyl-L-homocysteine hydrolase</fullName>
        <shortName evidence="1">AdoHcyase</shortName>
    </alternativeName>
</protein>
<sequence>MTTAPAISSRLDDPESARETGRAKIDWAFEHMPILSALREEFDANQPLAGETIGMAMHVEAKTAALVETMADAGAEIAITGCNPLSTHDGVSAALDAHESITSYAERGAEGEAYYDAIDAVLAHEPTVTVDDGGDLVFRVHEDHPELIDTIIGGTEETTTGVHRLRAMDDDDALEYPVFAVNDTPMKRLFDNVHGTGESALANIAMTTNLSWAGKDVVVAGYGDCGRGVAKKAAGQNANVIVTEVEPRRALEAHMEGYDVMPMAEAAEVGDVFLTTTGNKNVITRAHFERMDDGVVLANAGHFDVEVNLDHLSELAVSEREAREGVREYELADGRRLNVLAEGRLVNLASPIGLGHPVGVMDQSFGVQAVCVRELVANREEYAAGVHNVPDELDIEIAEIKLAAEGVEYDALTDDQAEYMDSWQHGT</sequence>
<organism>
    <name type="scientific">Halobacterium salinarum (strain ATCC 700922 / JCM 11081 / NRC-1)</name>
    <name type="common">Halobacterium halobium</name>
    <dbReference type="NCBI Taxonomy" id="64091"/>
    <lineage>
        <taxon>Archaea</taxon>
        <taxon>Methanobacteriati</taxon>
        <taxon>Methanobacteriota</taxon>
        <taxon>Stenosarchaea group</taxon>
        <taxon>Halobacteria</taxon>
        <taxon>Halobacteriales</taxon>
        <taxon>Halobacteriaceae</taxon>
        <taxon>Halobacterium</taxon>
        <taxon>Halobacterium salinarum NRC-34001</taxon>
    </lineage>
</organism>
<feature type="chain" id="PRO_0000117002" description="Adenosylhomocysteinase">
    <location>
        <begin position="1"/>
        <end position="427"/>
    </location>
</feature>
<feature type="binding site" evidence="1">
    <location>
        <position position="132"/>
    </location>
    <ligand>
        <name>substrate</name>
    </ligand>
</feature>
<feature type="binding site" evidence="1">
    <location>
        <position position="157"/>
    </location>
    <ligand>
        <name>substrate</name>
    </ligand>
</feature>
<feature type="binding site" evidence="1">
    <location>
        <begin position="158"/>
        <end position="160"/>
    </location>
    <ligand>
        <name>NAD(+)</name>
        <dbReference type="ChEBI" id="CHEBI:57540"/>
    </ligand>
</feature>
<feature type="binding site" evidence="1">
    <location>
        <position position="187"/>
    </location>
    <ligand>
        <name>substrate</name>
    </ligand>
</feature>
<feature type="binding site" evidence="1">
    <location>
        <position position="191"/>
    </location>
    <ligand>
        <name>substrate</name>
    </ligand>
</feature>
<feature type="binding site" evidence="1">
    <location>
        <position position="192"/>
    </location>
    <ligand>
        <name>NAD(+)</name>
        <dbReference type="ChEBI" id="CHEBI:57540"/>
    </ligand>
</feature>
<feature type="binding site" evidence="1">
    <location>
        <begin position="221"/>
        <end position="226"/>
    </location>
    <ligand>
        <name>NAD(+)</name>
        <dbReference type="ChEBI" id="CHEBI:57540"/>
    </ligand>
</feature>
<feature type="binding site" evidence="1">
    <location>
        <position position="244"/>
    </location>
    <ligand>
        <name>NAD(+)</name>
        <dbReference type="ChEBI" id="CHEBI:57540"/>
    </ligand>
</feature>
<feature type="binding site" evidence="1">
    <location>
        <position position="279"/>
    </location>
    <ligand>
        <name>NAD(+)</name>
        <dbReference type="ChEBI" id="CHEBI:57540"/>
    </ligand>
</feature>
<feature type="binding site" evidence="1">
    <location>
        <begin position="300"/>
        <end position="302"/>
    </location>
    <ligand>
        <name>NAD(+)</name>
        <dbReference type="ChEBI" id="CHEBI:57540"/>
    </ligand>
</feature>
<feature type="binding site" evidence="1">
    <location>
        <position position="347"/>
    </location>
    <ligand>
        <name>NAD(+)</name>
        <dbReference type="ChEBI" id="CHEBI:57540"/>
    </ligand>
</feature>
<gene>
    <name evidence="1" type="primary">ahcY</name>
    <name type="ordered locus">VNG_2251G</name>
</gene>
<evidence type="ECO:0000255" key="1">
    <source>
        <dbReference type="HAMAP-Rule" id="MF_00563"/>
    </source>
</evidence>
<dbReference type="EC" id="3.13.2.1" evidence="1"/>
<dbReference type="EMBL" id="AE004437">
    <property type="protein sequence ID" value="AAG20371.1"/>
    <property type="molecule type" value="Genomic_DNA"/>
</dbReference>
<dbReference type="PIR" id="G84375">
    <property type="entry name" value="G84375"/>
</dbReference>
<dbReference type="RefSeq" id="WP_010903672.1">
    <property type="nucleotide sequence ID" value="NC_002607.1"/>
</dbReference>
<dbReference type="SMR" id="Q9HN50"/>
<dbReference type="FunCoup" id="Q9HN50">
    <property type="interactions" value="107"/>
</dbReference>
<dbReference type="STRING" id="64091.VNG_2251G"/>
<dbReference type="PaxDb" id="64091-VNG_2251G"/>
<dbReference type="KEGG" id="hal:VNG_2251G"/>
<dbReference type="PATRIC" id="fig|64091.14.peg.1731"/>
<dbReference type="HOGENOM" id="CLU_025194_0_2_2"/>
<dbReference type="InParanoid" id="Q9HN50"/>
<dbReference type="OrthoDB" id="8479at2157"/>
<dbReference type="PhylomeDB" id="Q9HN50"/>
<dbReference type="UniPathway" id="UPA00314">
    <property type="reaction ID" value="UER00076"/>
</dbReference>
<dbReference type="Proteomes" id="UP000000554">
    <property type="component" value="Chromosome"/>
</dbReference>
<dbReference type="GO" id="GO:0005829">
    <property type="term" value="C:cytosol"/>
    <property type="evidence" value="ECO:0000318"/>
    <property type="project" value="GO_Central"/>
</dbReference>
<dbReference type="GO" id="GO:0004013">
    <property type="term" value="F:adenosylhomocysteinase activity"/>
    <property type="evidence" value="ECO:0000318"/>
    <property type="project" value="GO_Central"/>
</dbReference>
<dbReference type="GO" id="GO:0071269">
    <property type="term" value="P:L-homocysteine biosynthetic process"/>
    <property type="evidence" value="ECO:0007669"/>
    <property type="project" value="UniProtKB-UniRule"/>
</dbReference>
<dbReference type="GO" id="GO:0006730">
    <property type="term" value="P:one-carbon metabolic process"/>
    <property type="evidence" value="ECO:0007669"/>
    <property type="project" value="UniProtKB-KW"/>
</dbReference>
<dbReference type="GO" id="GO:0033353">
    <property type="term" value="P:S-adenosylmethionine cycle"/>
    <property type="evidence" value="ECO:0000318"/>
    <property type="project" value="GO_Central"/>
</dbReference>
<dbReference type="CDD" id="cd00401">
    <property type="entry name" value="SAHH"/>
    <property type="match status" value="1"/>
</dbReference>
<dbReference type="Gene3D" id="3.40.50.1480">
    <property type="entry name" value="Adenosylhomocysteinase-like"/>
    <property type="match status" value="1"/>
</dbReference>
<dbReference type="Gene3D" id="3.40.50.720">
    <property type="entry name" value="NAD(P)-binding Rossmann-like Domain"/>
    <property type="match status" value="1"/>
</dbReference>
<dbReference type="HAMAP" id="MF_00563">
    <property type="entry name" value="AdoHcyase"/>
    <property type="match status" value="1"/>
</dbReference>
<dbReference type="InterPro" id="IPR042172">
    <property type="entry name" value="Adenosylhomocyst_ase-like_sf"/>
</dbReference>
<dbReference type="InterPro" id="IPR000043">
    <property type="entry name" value="Adenosylhomocysteinase-like"/>
</dbReference>
<dbReference type="InterPro" id="IPR015878">
    <property type="entry name" value="Ado_hCys_hydrolase_NAD-bd"/>
</dbReference>
<dbReference type="InterPro" id="IPR036291">
    <property type="entry name" value="NAD(P)-bd_dom_sf"/>
</dbReference>
<dbReference type="InterPro" id="IPR020082">
    <property type="entry name" value="S-Ado-L-homoCys_hydrolase_CS"/>
</dbReference>
<dbReference type="NCBIfam" id="TIGR00936">
    <property type="entry name" value="ahcY"/>
    <property type="match status" value="1"/>
</dbReference>
<dbReference type="NCBIfam" id="NF004005">
    <property type="entry name" value="PRK05476.2-3"/>
    <property type="match status" value="1"/>
</dbReference>
<dbReference type="PANTHER" id="PTHR23420">
    <property type="entry name" value="ADENOSYLHOMOCYSTEINASE"/>
    <property type="match status" value="1"/>
</dbReference>
<dbReference type="PANTHER" id="PTHR23420:SF0">
    <property type="entry name" value="ADENOSYLHOMOCYSTEINASE"/>
    <property type="match status" value="1"/>
</dbReference>
<dbReference type="Pfam" id="PF05221">
    <property type="entry name" value="AdoHcyase"/>
    <property type="match status" value="1"/>
</dbReference>
<dbReference type="Pfam" id="PF00670">
    <property type="entry name" value="AdoHcyase_NAD"/>
    <property type="match status" value="1"/>
</dbReference>
<dbReference type="PIRSF" id="PIRSF001109">
    <property type="entry name" value="Ad_hcy_hydrolase"/>
    <property type="match status" value="1"/>
</dbReference>
<dbReference type="SMART" id="SM00996">
    <property type="entry name" value="AdoHcyase"/>
    <property type="match status" value="1"/>
</dbReference>
<dbReference type="SMART" id="SM00997">
    <property type="entry name" value="AdoHcyase_NAD"/>
    <property type="match status" value="1"/>
</dbReference>
<dbReference type="SUPFAM" id="SSF52283">
    <property type="entry name" value="Formate/glycerate dehydrogenase catalytic domain-like"/>
    <property type="match status" value="1"/>
</dbReference>
<dbReference type="SUPFAM" id="SSF51735">
    <property type="entry name" value="NAD(P)-binding Rossmann-fold domains"/>
    <property type="match status" value="1"/>
</dbReference>
<dbReference type="PROSITE" id="PS00738">
    <property type="entry name" value="ADOHCYASE_1"/>
    <property type="match status" value="1"/>
</dbReference>
<dbReference type="PROSITE" id="PS00739">
    <property type="entry name" value="ADOHCYASE_2"/>
    <property type="match status" value="1"/>
</dbReference>
<proteinExistence type="inferred from homology"/>